<name>SSRP_CLOB1</name>
<organism>
    <name type="scientific">Clostridium botulinum (strain ATCC 19397 / Type A)</name>
    <dbReference type="NCBI Taxonomy" id="441770"/>
    <lineage>
        <taxon>Bacteria</taxon>
        <taxon>Bacillati</taxon>
        <taxon>Bacillota</taxon>
        <taxon>Clostridia</taxon>
        <taxon>Eubacteriales</taxon>
        <taxon>Clostridiaceae</taxon>
        <taxon>Clostridium</taxon>
    </lineage>
</organism>
<dbReference type="EMBL" id="CP000726">
    <property type="protein sequence ID" value="ABS34198.1"/>
    <property type="molecule type" value="Genomic_DNA"/>
</dbReference>
<dbReference type="RefSeq" id="WP_003356515.1">
    <property type="nucleotide sequence ID" value="NC_009697.1"/>
</dbReference>
<dbReference type="SMR" id="A7FQP4"/>
<dbReference type="GeneID" id="5184489"/>
<dbReference type="KEGG" id="cba:CLB_0275"/>
<dbReference type="HOGENOM" id="CLU_108953_0_0_9"/>
<dbReference type="GO" id="GO:0005829">
    <property type="term" value="C:cytosol"/>
    <property type="evidence" value="ECO:0007669"/>
    <property type="project" value="TreeGrafter"/>
</dbReference>
<dbReference type="GO" id="GO:0003723">
    <property type="term" value="F:RNA binding"/>
    <property type="evidence" value="ECO:0007669"/>
    <property type="project" value="UniProtKB-UniRule"/>
</dbReference>
<dbReference type="GO" id="GO:0070929">
    <property type="term" value="P:trans-translation"/>
    <property type="evidence" value="ECO:0007669"/>
    <property type="project" value="UniProtKB-UniRule"/>
</dbReference>
<dbReference type="CDD" id="cd09294">
    <property type="entry name" value="SmpB"/>
    <property type="match status" value="1"/>
</dbReference>
<dbReference type="Gene3D" id="2.40.280.10">
    <property type="match status" value="1"/>
</dbReference>
<dbReference type="HAMAP" id="MF_00023">
    <property type="entry name" value="SmpB"/>
    <property type="match status" value="1"/>
</dbReference>
<dbReference type="InterPro" id="IPR023620">
    <property type="entry name" value="SmpB"/>
</dbReference>
<dbReference type="InterPro" id="IPR000037">
    <property type="entry name" value="SsrA-bd_prot"/>
</dbReference>
<dbReference type="InterPro" id="IPR020081">
    <property type="entry name" value="SsrA-bd_prot_CS"/>
</dbReference>
<dbReference type="NCBIfam" id="NF003843">
    <property type="entry name" value="PRK05422.1"/>
    <property type="match status" value="1"/>
</dbReference>
<dbReference type="NCBIfam" id="TIGR00086">
    <property type="entry name" value="smpB"/>
    <property type="match status" value="1"/>
</dbReference>
<dbReference type="PANTHER" id="PTHR30308:SF2">
    <property type="entry name" value="SSRA-BINDING PROTEIN"/>
    <property type="match status" value="1"/>
</dbReference>
<dbReference type="PANTHER" id="PTHR30308">
    <property type="entry name" value="TMRNA-BINDING COMPONENT OF TRANS-TRANSLATION TAGGING COMPLEX"/>
    <property type="match status" value="1"/>
</dbReference>
<dbReference type="Pfam" id="PF01668">
    <property type="entry name" value="SmpB"/>
    <property type="match status" value="1"/>
</dbReference>
<dbReference type="SUPFAM" id="SSF74982">
    <property type="entry name" value="Small protein B (SmpB)"/>
    <property type="match status" value="1"/>
</dbReference>
<dbReference type="PROSITE" id="PS01317">
    <property type="entry name" value="SSRP"/>
    <property type="match status" value="1"/>
</dbReference>
<comment type="function">
    <text evidence="1">Required for rescue of stalled ribosomes mediated by trans-translation. Binds to transfer-messenger RNA (tmRNA), required for stable association of tmRNA with ribosomes. tmRNA and SmpB together mimic tRNA shape, replacing the anticodon stem-loop with SmpB. tmRNA is encoded by the ssrA gene; the 2 termini fold to resemble tRNA(Ala) and it encodes a 'tag peptide', a short internal open reading frame. During trans-translation Ala-aminoacylated tmRNA acts like a tRNA, entering the A-site of stalled ribosomes, displacing the stalled mRNA. The ribosome then switches to translate the ORF on the tmRNA; the nascent peptide is terminated with the 'tag peptide' encoded by the tmRNA and targeted for degradation. The ribosome is freed to recommence translation, which seems to be the essential function of trans-translation.</text>
</comment>
<comment type="subcellular location">
    <subcellularLocation>
        <location evidence="1">Cytoplasm</location>
    </subcellularLocation>
    <text evidence="1">The tmRNA-SmpB complex associates with stalled 70S ribosomes.</text>
</comment>
<comment type="similarity">
    <text evidence="1">Belongs to the SmpB family.</text>
</comment>
<keyword id="KW-0963">Cytoplasm</keyword>
<keyword id="KW-0694">RNA-binding</keyword>
<proteinExistence type="inferred from homology"/>
<gene>
    <name evidence="1" type="primary">smpB</name>
    <name type="ordered locus">CLB_0275</name>
</gene>
<evidence type="ECO:0000255" key="1">
    <source>
        <dbReference type="HAMAP-Rule" id="MF_00023"/>
    </source>
</evidence>
<accession>A7FQP4</accession>
<sequence>MSKKKGSNTLAENRKARHDYFIEETYEAGIELVGTEVKSIRQGKANLKDSYAEIRNGEVFVRNMHISPYEQGNIYNKDPLRDRKLLLHKSEIYKLVGFTTQQGYTLIPLSLYLKHGRVKVSLAVAKGKKNYDKRDAMLEKAAKREMDRQIKERSRY</sequence>
<reference key="1">
    <citation type="journal article" date="2007" name="PLoS ONE">
        <title>Analysis of the neurotoxin complex genes in Clostridium botulinum A1-A4 and B1 strains: BoNT/A3, /Ba4 and /B1 clusters are located within plasmids.</title>
        <authorList>
            <person name="Smith T.J."/>
            <person name="Hill K.K."/>
            <person name="Foley B.T."/>
            <person name="Detter J.C."/>
            <person name="Munk A.C."/>
            <person name="Bruce D.C."/>
            <person name="Doggett N.A."/>
            <person name="Smith L.A."/>
            <person name="Marks J.D."/>
            <person name="Xie G."/>
            <person name="Brettin T.S."/>
        </authorList>
    </citation>
    <scope>NUCLEOTIDE SEQUENCE [LARGE SCALE GENOMIC DNA]</scope>
    <source>
        <strain>ATCC 19397 / Type A</strain>
    </source>
</reference>
<protein>
    <recommendedName>
        <fullName evidence="1">SsrA-binding protein</fullName>
    </recommendedName>
    <alternativeName>
        <fullName evidence="1">Small protein B</fullName>
    </alternativeName>
</protein>
<feature type="chain" id="PRO_1000002034" description="SsrA-binding protein">
    <location>
        <begin position="1"/>
        <end position="156"/>
    </location>
</feature>